<accession>Q03ME0</accession>
<name>UREG_STRTD</name>
<reference key="1">
    <citation type="journal article" date="2006" name="Proc. Natl. Acad. Sci. U.S.A.">
        <title>Comparative genomics of the lactic acid bacteria.</title>
        <authorList>
            <person name="Makarova K.S."/>
            <person name="Slesarev A."/>
            <person name="Wolf Y.I."/>
            <person name="Sorokin A."/>
            <person name="Mirkin B."/>
            <person name="Koonin E.V."/>
            <person name="Pavlov A."/>
            <person name="Pavlova N."/>
            <person name="Karamychev V."/>
            <person name="Polouchine N."/>
            <person name="Shakhova V."/>
            <person name="Grigoriev I."/>
            <person name="Lou Y."/>
            <person name="Rohksar D."/>
            <person name="Lucas S."/>
            <person name="Huang K."/>
            <person name="Goodstein D.M."/>
            <person name="Hawkins T."/>
            <person name="Plengvidhya V."/>
            <person name="Welker D."/>
            <person name="Hughes J."/>
            <person name="Goh Y."/>
            <person name="Benson A."/>
            <person name="Baldwin K."/>
            <person name="Lee J.-H."/>
            <person name="Diaz-Muniz I."/>
            <person name="Dosti B."/>
            <person name="Smeianov V."/>
            <person name="Wechter W."/>
            <person name="Barabote R."/>
            <person name="Lorca G."/>
            <person name="Altermann E."/>
            <person name="Barrangou R."/>
            <person name="Ganesan B."/>
            <person name="Xie Y."/>
            <person name="Rawsthorne H."/>
            <person name="Tamir D."/>
            <person name="Parker C."/>
            <person name="Breidt F."/>
            <person name="Broadbent J.R."/>
            <person name="Hutkins R."/>
            <person name="O'Sullivan D."/>
            <person name="Steele J."/>
            <person name="Unlu G."/>
            <person name="Saier M.H. Jr."/>
            <person name="Klaenhammer T."/>
            <person name="Richardson P."/>
            <person name="Kozyavkin S."/>
            <person name="Weimer B.C."/>
            <person name="Mills D.A."/>
        </authorList>
    </citation>
    <scope>NUCLEOTIDE SEQUENCE [LARGE SCALE GENOMIC DNA]</scope>
    <source>
        <strain>ATCC BAA-491 / LMD-9</strain>
    </source>
</reference>
<feature type="chain" id="PRO_1000145241" description="Urease accessory protein UreG">
    <location>
        <begin position="1"/>
        <end position="204"/>
    </location>
</feature>
<feature type="binding site" evidence="1">
    <location>
        <begin position="12"/>
        <end position="19"/>
    </location>
    <ligand>
        <name>GTP</name>
        <dbReference type="ChEBI" id="CHEBI:37565"/>
    </ligand>
</feature>
<protein>
    <recommendedName>
        <fullName evidence="1">Urease accessory protein UreG</fullName>
    </recommendedName>
</protein>
<gene>
    <name evidence="1" type="primary">ureG</name>
    <name type="ordered locus">STER_0328</name>
</gene>
<proteinExistence type="inferred from homology"/>
<organism>
    <name type="scientific">Streptococcus thermophilus (strain ATCC BAA-491 / LMD-9)</name>
    <dbReference type="NCBI Taxonomy" id="322159"/>
    <lineage>
        <taxon>Bacteria</taxon>
        <taxon>Bacillati</taxon>
        <taxon>Bacillota</taxon>
        <taxon>Bacilli</taxon>
        <taxon>Lactobacillales</taxon>
        <taxon>Streptococcaceae</taxon>
        <taxon>Streptococcus</taxon>
    </lineage>
</organism>
<comment type="function">
    <text evidence="1">Facilitates the functional incorporation of the urease nickel metallocenter. This process requires GTP hydrolysis, probably effectuated by UreG.</text>
</comment>
<comment type="subunit">
    <text evidence="1">Homodimer. UreD, UreF and UreG form a complex that acts as a GTP-hydrolysis-dependent molecular chaperone, activating the urease apoprotein by helping to assemble the nickel containing metallocenter of UreC. The UreE protein probably delivers the nickel.</text>
</comment>
<comment type="subcellular location">
    <subcellularLocation>
        <location evidence="1">Cytoplasm</location>
    </subcellularLocation>
</comment>
<comment type="similarity">
    <text evidence="1">Belongs to the SIMIBI class G3E GTPase family. UreG subfamily.</text>
</comment>
<sequence>MTKRTVIIGVGGPVGSGKTLLLERLTRRMSDLNLAVITNDIYTKEDALFLAKNSSLDEDRIIGVETGGCPHTAIREDASMNFEAIETLQERFNHDLDVIFLESGGDNLAATFSPDLVDFTIYIIDVAQGEKIPRKAGQGMIKSDLFLINKTDLAPYVGANLDRMREDTLHFRNEDSFIFTNLNNDDNVKEVEEWIRKNFLLEDL</sequence>
<evidence type="ECO:0000255" key="1">
    <source>
        <dbReference type="HAMAP-Rule" id="MF_01389"/>
    </source>
</evidence>
<keyword id="KW-0143">Chaperone</keyword>
<keyword id="KW-0963">Cytoplasm</keyword>
<keyword id="KW-0342">GTP-binding</keyword>
<keyword id="KW-0996">Nickel insertion</keyword>
<keyword id="KW-0547">Nucleotide-binding</keyword>
<dbReference type="EMBL" id="CP000419">
    <property type="protein sequence ID" value="ABJ65632.1"/>
    <property type="molecule type" value="Genomic_DNA"/>
</dbReference>
<dbReference type="RefSeq" id="WP_002889928.1">
    <property type="nucleotide sequence ID" value="NZ_CP086001.1"/>
</dbReference>
<dbReference type="SMR" id="Q03ME0"/>
<dbReference type="GeneID" id="93791475"/>
<dbReference type="KEGG" id="ste:STER_0328"/>
<dbReference type="HOGENOM" id="CLU_072144_1_0_9"/>
<dbReference type="GO" id="GO:0005737">
    <property type="term" value="C:cytoplasm"/>
    <property type="evidence" value="ECO:0007669"/>
    <property type="project" value="UniProtKB-SubCell"/>
</dbReference>
<dbReference type="GO" id="GO:0005525">
    <property type="term" value="F:GTP binding"/>
    <property type="evidence" value="ECO:0007669"/>
    <property type="project" value="UniProtKB-KW"/>
</dbReference>
<dbReference type="GO" id="GO:0003924">
    <property type="term" value="F:GTPase activity"/>
    <property type="evidence" value="ECO:0007669"/>
    <property type="project" value="InterPro"/>
</dbReference>
<dbReference type="GO" id="GO:0016151">
    <property type="term" value="F:nickel cation binding"/>
    <property type="evidence" value="ECO:0007669"/>
    <property type="project" value="UniProtKB-UniRule"/>
</dbReference>
<dbReference type="GO" id="GO:0043419">
    <property type="term" value="P:urea catabolic process"/>
    <property type="evidence" value="ECO:0007669"/>
    <property type="project" value="InterPro"/>
</dbReference>
<dbReference type="CDD" id="cd05540">
    <property type="entry name" value="UreG"/>
    <property type="match status" value="1"/>
</dbReference>
<dbReference type="Gene3D" id="3.40.50.300">
    <property type="entry name" value="P-loop containing nucleotide triphosphate hydrolases"/>
    <property type="match status" value="1"/>
</dbReference>
<dbReference type="HAMAP" id="MF_01389">
    <property type="entry name" value="UreG"/>
    <property type="match status" value="1"/>
</dbReference>
<dbReference type="InterPro" id="IPR003495">
    <property type="entry name" value="CobW/HypB/UreG_nucleotide-bd"/>
</dbReference>
<dbReference type="InterPro" id="IPR027417">
    <property type="entry name" value="P-loop_NTPase"/>
</dbReference>
<dbReference type="InterPro" id="IPR004400">
    <property type="entry name" value="UreG"/>
</dbReference>
<dbReference type="NCBIfam" id="TIGR00101">
    <property type="entry name" value="ureG"/>
    <property type="match status" value="1"/>
</dbReference>
<dbReference type="PANTHER" id="PTHR31715">
    <property type="entry name" value="UREASE ACCESSORY PROTEIN G"/>
    <property type="match status" value="1"/>
</dbReference>
<dbReference type="PANTHER" id="PTHR31715:SF0">
    <property type="entry name" value="UREASE ACCESSORY PROTEIN G"/>
    <property type="match status" value="1"/>
</dbReference>
<dbReference type="Pfam" id="PF02492">
    <property type="entry name" value="cobW"/>
    <property type="match status" value="1"/>
</dbReference>
<dbReference type="PIRSF" id="PIRSF005624">
    <property type="entry name" value="Ni-bind_GTPase"/>
    <property type="match status" value="1"/>
</dbReference>
<dbReference type="SUPFAM" id="SSF52540">
    <property type="entry name" value="P-loop containing nucleoside triphosphate hydrolases"/>
    <property type="match status" value="1"/>
</dbReference>